<evidence type="ECO:0000255" key="1">
    <source>
        <dbReference type="HAMAP-Rule" id="MF_00073"/>
    </source>
</evidence>
<proteinExistence type="inferred from homology"/>
<comment type="function">
    <text evidence="1">Involved in transcription antitermination. Required for transcription of ribosomal RNA (rRNA) genes. Binds specifically to the boxA antiterminator sequence of the ribosomal RNA (rrn) operons.</text>
</comment>
<comment type="similarity">
    <text evidence="1">Belongs to the NusB family.</text>
</comment>
<name>NUSB_SHESM</name>
<organism>
    <name type="scientific">Shewanella sp. (strain MR-4)</name>
    <dbReference type="NCBI Taxonomy" id="60480"/>
    <lineage>
        <taxon>Bacteria</taxon>
        <taxon>Pseudomonadati</taxon>
        <taxon>Pseudomonadota</taxon>
        <taxon>Gammaproteobacteria</taxon>
        <taxon>Alteromonadales</taxon>
        <taxon>Shewanellaceae</taxon>
        <taxon>Shewanella</taxon>
    </lineage>
</organism>
<keyword id="KW-0694">RNA-binding</keyword>
<keyword id="KW-0804">Transcription</keyword>
<keyword id="KW-0889">Transcription antitermination</keyword>
<keyword id="KW-0805">Transcription regulation</keyword>
<feature type="chain" id="PRO_0000265590" description="Transcription antitermination protein NusB">
    <location>
        <begin position="1"/>
        <end position="134"/>
    </location>
</feature>
<gene>
    <name evidence="1" type="primary">nusB</name>
    <name type="ordered locus">Shewmr4_1100</name>
</gene>
<dbReference type="EMBL" id="CP000446">
    <property type="protein sequence ID" value="ABI38180.1"/>
    <property type="molecule type" value="Genomic_DNA"/>
</dbReference>
<dbReference type="RefSeq" id="WP_011621889.1">
    <property type="nucleotide sequence ID" value="NC_008321.1"/>
</dbReference>
<dbReference type="SMR" id="Q0HL87"/>
<dbReference type="GeneID" id="94727099"/>
<dbReference type="KEGG" id="she:Shewmr4_1100"/>
<dbReference type="HOGENOM" id="CLU_087843_4_1_6"/>
<dbReference type="GO" id="GO:0005829">
    <property type="term" value="C:cytosol"/>
    <property type="evidence" value="ECO:0007669"/>
    <property type="project" value="TreeGrafter"/>
</dbReference>
<dbReference type="GO" id="GO:0003723">
    <property type="term" value="F:RNA binding"/>
    <property type="evidence" value="ECO:0007669"/>
    <property type="project" value="UniProtKB-UniRule"/>
</dbReference>
<dbReference type="GO" id="GO:0006353">
    <property type="term" value="P:DNA-templated transcription termination"/>
    <property type="evidence" value="ECO:0007669"/>
    <property type="project" value="UniProtKB-UniRule"/>
</dbReference>
<dbReference type="GO" id="GO:0031564">
    <property type="term" value="P:transcription antitermination"/>
    <property type="evidence" value="ECO:0007669"/>
    <property type="project" value="UniProtKB-KW"/>
</dbReference>
<dbReference type="CDD" id="cd00619">
    <property type="entry name" value="Terminator_NusB"/>
    <property type="match status" value="1"/>
</dbReference>
<dbReference type="FunFam" id="1.10.940.10:FF:000001">
    <property type="entry name" value="Transcription antitermination factor NusB"/>
    <property type="match status" value="1"/>
</dbReference>
<dbReference type="Gene3D" id="1.10.940.10">
    <property type="entry name" value="NusB-like"/>
    <property type="match status" value="1"/>
</dbReference>
<dbReference type="HAMAP" id="MF_00073">
    <property type="entry name" value="NusB"/>
    <property type="match status" value="1"/>
</dbReference>
<dbReference type="InterPro" id="IPR035926">
    <property type="entry name" value="NusB-like_sf"/>
</dbReference>
<dbReference type="InterPro" id="IPR011605">
    <property type="entry name" value="NusB_fam"/>
</dbReference>
<dbReference type="InterPro" id="IPR006027">
    <property type="entry name" value="NusB_RsmB_TIM44"/>
</dbReference>
<dbReference type="NCBIfam" id="TIGR01951">
    <property type="entry name" value="nusB"/>
    <property type="match status" value="1"/>
</dbReference>
<dbReference type="PANTHER" id="PTHR11078:SF3">
    <property type="entry name" value="ANTITERMINATION NUSB DOMAIN-CONTAINING PROTEIN"/>
    <property type="match status" value="1"/>
</dbReference>
<dbReference type="PANTHER" id="PTHR11078">
    <property type="entry name" value="N UTILIZATION SUBSTANCE PROTEIN B-RELATED"/>
    <property type="match status" value="1"/>
</dbReference>
<dbReference type="Pfam" id="PF01029">
    <property type="entry name" value="NusB"/>
    <property type="match status" value="1"/>
</dbReference>
<dbReference type="SUPFAM" id="SSF48013">
    <property type="entry name" value="NusB-like"/>
    <property type="match status" value="1"/>
</dbReference>
<accession>Q0HL87</accession>
<reference key="1">
    <citation type="submission" date="2006-08" db="EMBL/GenBank/DDBJ databases">
        <title>Complete sequence of Shewanella sp. MR-4.</title>
        <authorList>
            <consortium name="US DOE Joint Genome Institute"/>
            <person name="Copeland A."/>
            <person name="Lucas S."/>
            <person name="Lapidus A."/>
            <person name="Barry K."/>
            <person name="Detter J.C."/>
            <person name="Glavina del Rio T."/>
            <person name="Hammon N."/>
            <person name="Israni S."/>
            <person name="Dalin E."/>
            <person name="Tice H."/>
            <person name="Pitluck S."/>
            <person name="Kiss H."/>
            <person name="Brettin T."/>
            <person name="Bruce D."/>
            <person name="Han C."/>
            <person name="Tapia R."/>
            <person name="Gilna P."/>
            <person name="Schmutz J."/>
            <person name="Larimer F."/>
            <person name="Land M."/>
            <person name="Hauser L."/>
            <person name="Kyrpides N."/>
            <person name="Mikhailova N."/>
            <person name="Nealson K."/>
            <person name="Konstantinidis K."/>
            <person name="Klappenbach J."/>
            <person name="Tiedje J."/>
            <person name="Richardson P."/>
        </authorList>
    </citation>
    <scope>NUCLEOTIDE SEQUENCE [LARGE SCALE GENOMIC DNA]</scope>
    <source>
        <strain>MR-4</strain>
    </source>
</reference>
<sequence>MKPSERRKARRLAVQAIYSWQLSGNNIADVEHEFLTEQSLDGVDVAYFRELFAGVATKKTQLDELFIPHLDRPIDEVSPVEKAIVRLAAYELTFRKDVPFKVAINEAIELAKAFGADESHKFVNGLLDKLVARK</sequence>
<protein>
    <recommendedName>
        <fullName evidence="1">Transcription antitermination protein NusB</fullName>
    </recommendedName>
    <alternativeName>
        <fullName evidence="1">Antitermination factor NusB</fullName>
    </alternativeName>
</protein>